<protein>
    <recommendedName>
        <fullName evidence="1">Chorismate synthase</fullName>
        <shortName evidence="1">CS</shortName>
        <ecNumber evidence="1">4.2.3.5</ecNumber>
    </recommendedName>
    <alternativeName>
        <fullName evidence="1">5-enolpyruvylshikimate-3-phosphate phospholyase</fullName>
    </alternativeName>
</protein>
<sequence>MIRYFTAGESHGPALSAIVEGMPAGVALTESDINDQLARRQQGYGRGGRMKIETDRAEVLSGIRFGKTIGSPVAMVIRNRDWENWTVPMAQFDDNSAEVQKITIPRPGHADLTGFVKYGFDDIRPVIDRSSARETAARVAAGSLARAFLRQLGIQIGSYISTIGPVSEASAPAALPELLDAGAESLAAEADKSPVRMIDPATSEAAIAAIDQAKADGDTLGGIVEVYITGVPMGLGSYVQHDRRLDSALAAAIMSIQAIKGVEIGPAFDNARKPGSEVHDELFAGGEKGLRRKTNRAGGIEGSMSSGQPIHIRAAMKPISSLVSPLRSFDLATLEAVQSRFERSDTCAVPAAGIVAEAVVAPSSPTPCWKSSAEIIWRRLRKGWRLIGKRYEYALQGKKLRREPEVFAID</sequence>
<accession>B3QMJ7</accession>
<name>AROC_CHLP8</name>
<proteinExistence type="inferred from homology"/>
<dbReference type="EC" id="4.2.3.5" evidence="1"/>
<dbReference type="EMBL" id="CP001099">
    <property type="protein sequence ID" value="ACF11150.1"/>
    <property type="molecule type" value="Genomic_DNA"/>
</dbReference>
<dbReference type="SMR" id="B3QMJ7"/>
<dbReference type="STRING" id="517417.Cpar_0731"/>
<dbReference type="KEGG" id="cpc:Cpar_0731"/>
<dbReference type="eggNOG" id="COG0082">
    <property type="taxonomic scope" value="Bacteria"/>
</dbReference>
<dbReference type="HOGENOM" id="CLU_034547_2_0_10"/>
<dbReference type="OrthoDB" id="9771806at2"/>
<dbReference type="UniPathway" id="UPA00053">
    <property type="reaction ID" value="UER00090"/>
</dbReference>
<dbReference type="Proteomes" id="UP000008811">
    <property type="component" value="Chromosome"/>
</dbReference>
<dbReference type="GO" id="GO:0005829">
    <property type="term" value="C:cytosol"/>
    <property type="evidence" value="ECO:0007669"/>
    <property type="project" value="TreeGrafter"/>
</dbReference>
<dbReference type="GO" id="GO:0004107">
    <property type="term" value="F:chorismate synthase activity"/>
    <property type="evidence" value="ECO:0007669"/>
    <property type="project" value="UniProtKB-UniRule"/>
</dbReference>
<dbReference type="GO" id="GO:0010181">
    <property type="term" value="F:FMN binding"/>
    <property type="evidence" value="ECO:0007669"/>
    <property type="project" value="TreeGrafter"/>
</dbReference>
<dbReference type="GO" id="GO:0008652">
    <property type="term" value="P:amino acid biosynthetic process"/>
    <property type="evidence" value="ECO:0007669"/>
    <property type="project" value="UniProtKB-KW"/>
</dbReference>
<dbReference type="GO" id="GO:0009073">
    <property type="term" value="P:aromatic amino acid family biosynthetic process"/>
    <property type="evidence" value="ECO:0007669"/>
    <property type="project" value="UniProtKB-KW"/>
</dbReference>
<dbReference type="GO" id="GO:0009423">
    <property type="term" value="P:chorismate biosynthetic process"/>
    <property type="evidence" value="ECO:0007669"/>
    <property type="project" value="UniProtKB-UniRule"/>
</dbReference>
<dbReference type="CDD" id="cd07304">
    <property type="entry name" value="Chorismate_synthase"/>
    <property type="match status" value="1"/>
</dbReference>
<dbReference type="FunFam" id="3.60.150.10:FF:000002">
    <property type="entry name" value="Chorismate synthase"/>
    <property type="match status" value="1"/>
</dbReference>
<dbReference type="Gene3D" id="3.60.150.10">
    <property type="entry name" value="Chorismate synthase AroC"/>
    <property type="match status" value="1"/>
</dbReference>
<dbReference type="HAMAP" id="MF_00300">
    <property type="entry name" value="Chorismate_synth"/>
    <property type="match status" value="1"/>
</dbReference>
<dbReference type="InterPro" id="IPR000453">
    <property type="entry name" value="Chorismate_synth"/>
</dbReference>
<dbReference type="InterPro" id="IPR035904">
    <property type="entry name" value="Chorismate_synth_AroC_sf"/>
</dbReference>
<dbReference type="InterPro" id="IPR020541">
    <property type="entry name" value="Chorismate_synthase_CS"/>
</dbReference>
<dbReference type="NCBIfam" id="TIGR00033">
    <property type="entry name" value="aroC"/>
    <property type="match status" value="1"/>
</dbReference>
<dbReference type="NCBIfam" id="NF003793">
    <property type="entry name" value="PRK05382.1"/>
    <property type="match status" value="1"/>
</dbReference>
<dbReference type="PANTHER" id="PTHR21085">
    <property type="entry name" value="CHORISMATE SYNTHASE"/>
    <property type="match status" value="1"/>
</dbReference>
<dbReference type="PANTHER" id="PTHR21085:SF0">
    <property type="entry name" value="CHORISMATE SYNTHASE"/>
    <property type="match status" value="1"/>
</dbReference>
<dbReference type="Pfam" id="PF01264">
    <property type="entry name" value="Chorismate_synt"/>
    <property type="match status" value="1"/>
</dbReference>
<dbReference type="PIRSF" id="PIRSF001456">
    <property type="entry name" value="Chorismate_synth"/>
    <property type="match status" value="1"/>
</dbReference>
<dbReference type="SUPFAM" id="SSF103263">
    <property type="entry name" value="Chorismate synthase, AroC"/>
    <property type="match status" value="1"/>
</dbReference>
<dbReference type="PROSITE" id="PS00787">
    <property type="entry name" value="CHORISMATE_SYNTHASE_1"/>
    <property type="match status" value="1"/>
</dbReference>
<reference key="1">
    <citation type="submission" date="2008-06" db="EMBL/GenBank/DDBJ databases">
        <title>Complete sequence of Chlorobaculum parvum NCIB 8327.</title>
        <authorList>
            <consortium name="US DOE Joint Genome Institute"/>
            <person name="Lucas S."/>
            <person name="Copeland A."/>
            <person name="Lapidus A."/>
            <person name="Glavina del Rio T."/>
            <person name="Dalin E."/>
            <person name="Tice H."/>
            <person name="Bruce D."/>
            <person name="Goodwin L."/>
            <person name="Pitluck S."/>
            <person name="Schmutz J."/>
            <person name="Larimer F."/>
            <person name="Land M."/>
            <person name="Hauser L."/>
            <person name="Kyrpides N."/>
            <person name="Mikhailova N."/>
            <person name="Zhao F."/>
            <person name="Li T."/>
            <person name="Liu Z."/>
            <person name="Overmann J."/>
            <person name="Bryant D.A."/>
            <person name="Richardson P."/>
        </authorList>
    </citation>
    <scope>NUCLEOTIDE SEQUENCE [LARGE SCALE GENOMIC DNA]</scope>
    <source>
        <strain>DSM 263 / NCIMB 8327</strain>
    </source>
</reference>
<evidence type="ECO:0000255" key="1">
    <source>
        <dbReference type="HAMAP-Rule" id="MF_00300"/>
    </source>
</evidence>
<keyword id="KW-0028">Amino-acid biosynthesis</keyword>
<keyword id="KW-0057">Aromatic amino acid biosynthesis</keyword>
<keyword id="KW-0274">FAD</keyword>
<keyword id="KW-0285">Flavoprotein</keyword>
<keyword id="KW-0288">FMN</keyword>
<keyword id="KW-0456">Lyase</keyword>
<keyword id="KW-0521">NADP</keyword>
<feature type="chain" id="PRO_1000115340" description="Chorismate synthase">
    <location>
        <begin position="1"/>
        <end position="410"/>
    </location>
</feature>
<feature type="binding site" evidence="1">
    <location>
        <position position="40"/>
    </location>
    <ligand>
        <name>NADP(+)</name>
        <dbReference type="ChEBI" id="CHEBI:58349"/>
    </ligand>
</feature>
<feature type="binding site" evidence="1">
    <location>
        <position position="46"/>
    </location>
    <ligand>
        <name>NADP(+)</name>
        <dbReference type="ChEBI" id="CHEBI:58349"/>
    </ligand>
</feature>
<feature type="binding site" evidence="1">
    <location>
        <begin position="129"/>
        <end position="131"/>
    </location>
    <ligand>
        <name>FMN</name>
        <dbReference type="ChEBI" id="CHEBI:58210"/>
    </ligand>
</feature>
<feature type="binding site" evidence="1">
    <location>
        <begin position="257"/>
        <end position="258"/>
    </location>
    <ligand>
        <name>FMN</name>
        <dbReference type="ChEBI" id="CHEBI:58210"/>
    </ligand>
</feature>
<feature type="binding site" evidence="1">
    <location>
        <position position="302"/>
    </location>
    <ligand>
        <name>FMN</name>
        <dbReference type="ChEBI" id="CHEBI:58210"/>
    </ligand>
</feature>
<feature type="binding site" evidence="1">
    <location>
        <begin position="317"/>
        <end position="321"/>
    </location>
    <ligand>
        <name>FMN</name>
        <dbReference type="ChEBI" id="CHEBI:58210"/>
    </ligand>
</feature>
<feature type="binding site" evidence="1">
    <location>
        <position position="343"/>
    </location>
    <ligand>
        <name>FMN</name>
        <dbReference type="ChEBI" id="CHEBI:58210"/>
    </ligand>
</feature>
<gene>
    <name evidence="1" type="primary">aroC</name>
    <name type="ordered locus">Cpar_0731</name>
</gene>
<comment type="function">
    <text evidence="1">Catalyzes the anti-1,4-elimination of the C-3 phosphate and the C-6 proR hydrogen from 5-enolpyruvylshikimate-3-phosphate (EPSP) to yield chorismate, which is the branch point compound that serves as the starting substrate for the three terminal pathways of aromatic amino acid biosynthesis. This reaction introduces a second double bond into the aromatic ring system.</text>
</comment>
<comment type="catalytic activity">
    <reaction evidence="1">
        <text>5-O-(1-carboxyvinyl)-3-phosphoshikimate = chorismate + phosphate</text>
        <dbReference type="Rhea" id="RHEA:21020"/>
        <dbReference type="ChEBI" id="CHEBI:29748"/>
        <dbReference type="ChEBI" id="CHEBI:43474"/>
        <dbReference type="ChEBI" id="CHEBI:57701"/>
        <dbReference type="EC" id="4.2.3.5"/>
    </reaction>
</comment>
<comment type="cofactor">
    <cofactor evidence="1">
        <name>FMNH2</name>
        <dbReference type="ChEBI" id="CHEBI:57618"/>
    </cofactor>
    <text evidence="1">Reduced FMN (FMNH(2)).</text>
</comment>
<comment type="pathway">
    <text evidence="1">Metabolic intermediate biosynthesis; chorismate biosynthesis; chorismate from D-erythrose 4-phosphate and phosphoenolpyruvate: step 7/7.</text>
</comment>
<comment type="subunit">
    <text evidence="1">Homotetramer.</text>
</comment>
<comment type="similarity">
    <text evidence="1">Belongs to the chorismate synthase family.</text>
</comment>
<organism>
    <name type="scientific">Chlorobaculum parvum (strain DSM 263 / NCIMB 8327)</name>
    <name type="common">Chlorobium vibrioforme subsp. thiosulfatophilum</name>
    <dbReference type="NCBI Taxonomy" id="517417"/>
    <lineage>
        <taxon>Bacteria</taxon>
        <taxon>Pseudomonadati</taxon>
        <taxon>Chlorobiota</taxon>
        <taxon>Chlorobiia</taxon>
        <taxon>Chlorobiales</taxon>
        <taxon>Chlorobiaceae</taxon>
        <taxon>Chlorobaculum</taxon>
    </lineage>
</organism>